<evidence type="ECO:0000255" key="1">
    <source>
        <dbReference type="HAMAP-Rule" id="MF_00291"/>
    </source>
</evidence>
<evidence type="ECO:0000256" key="2">
    <source>
        <dbReference type="SAM" id="MobiDB-lite"/>
    </source>
</evidence>
<evidence type="ECO:0000305" key="3"/>
<protein>
    <recommendedName>
        <fullName evidence="1">Small ribosomal subunit protein uS2</fullName>
    </recommendedName>
    <alternativeName>
        <fullName evidence="3">30S ribosomal protein S2</fullName>
    </alternativeName>
</protein>
<dbReference type="EMBL" id="CP001628">
    <property type="protein sequence ID" value="ACS30206.1"/>
    <property type="molecule type" value="Genomic_DNA"/>
</dbReference>
<dbReference type="RefSeq" id="WP_010079158.1">
    <property type="nucleotide sequence ID" value="NC_012803.1"/>
</dbReference>
<dbReference type="SMR" id="C5C9Q4"/>
<dbReference type="STRING" id="465515.Mlut_06740"/>
<dbReference type="EnsemblBacteria" id="ACS30206">
    <property type="protein sequence ID" value="ACS30206"/>
    <property type="gene ID" value="Mlut_06740"/>
</dbReference>
<dbReference type="GeneID" id="93344839"/>
<dbReference type="KEGG" id="mlu:Mlut_06740"/>
<dbReference type="PATRIC" id="fig|465515.4.peg.638"/>
<dbReference type="eggNOG" id="COG0052">
    <property type="taxonomic scope" value="Bacteria"/>
</dbReference>
<dbReference type="HOGENOM" id="CLU_040318_2_3_11"/>
<dbReference type="Proteomes" id="UP000000738">
    <property type="component" value="Chromosome"/>
</dbReference>
<dbReference type="GO" id="GO:0022627">
    <property type="term" value="C:cytosolic small ribosomal subunit"/>
    <property type="evidence" value="ECO:0007669"/>
    <property type="project" value="TreeGrafter"/>
</dbReference>
<dbReference type="GO" id="GO:0003735">
    <property type="term" value="F:structural constituent of ribosome"/>
    <property type="evidence" value="ECO:0007669"/>
    <property type="project" value="InterPro"/>
</dbReference>
<dbReference type="GO" id="GO:0006412">
    <property type="term" value="P:translation"/>
    <property type="evidence" value="ECO:0007669"/>
    <property type="project" value="UniProtKB-UniRule"/>
</dbReference>
<dbReference type="CDD" id="cd01425">
    <property type="entry name" value="RPS2"/>
    <property type="match status" value="1"/>
</dbReference>
<dbReference type="FunFam" id="1.10.287.610:FF:000001">
    <property type="entry name" value="30S ribosomal protein S2"/>
    <property type="match status" value="1"/>
</dbReference>
<dbReference type="Gene3D" id="3.40.50.10490">
    <property type="entry name" value="Glucose-6-phosphate isomerase like protein, domain 1"/>
    <property type="match status" value="1"/>
</dbReference>
<dbReference type="Gene3D" id="1.10.287.610">
    <property type="entry name" value="Helix hairpin bin"/>
    <property type="match status" value="1"/>
</dbReference>
<dbReference type="HAMAP" id="MF_00291_B">
    <property type="entry name" value="Ribosomal_uS2_B"/>
    <property type="match status" value="1"/>
</dbReference>
<dbReference type="InterPro" id="IPR001865">
    <property type="entry name" value="Ribosomal_uS2"/>
</dbReference>
<dbReference type="InterPro" id="IPR005706">
    <property type="entry name" value="Ribosomal_uS2_bac/mit/plastid"/>
</dbReference>
<dbReference type="InterPro" id="IPR018130">
    <property type="entry name" value="Ribosomal_uS2_CS"/>
</dbReference>
<dbReference type="InterPro" id="IPR023591">
    <property type="entry name" value="Ribosomal_uS2_flav_dom_sf"/>
</dbReference>
<dbReference type="NCBIfam" id="TIGR01011">
    <property type="entry name" value="rpsB_bact"/>
    <property type="match status" value="1"/>
</dbReference>
<dbReference type="PANTHER" id="PTHR12534">
    <property type="entry name" value="30S RIBOSOMAL PROTEIN S2 PROKARYOTIC AND ORGANELLAR"/>
    <property type="match status" value="1"/>
</dbReference>
<dbReference type="PANTHER" id="PTHR12534:SF0">
    <property type="entry name" value="SMALL RIBOSOMAL SUBUNIT PROTEIN US2M"/>
    <property type="match status" value="1"/>
</dbReference>
<dbReference type="Pfam" id="PF00318">
    <property type="entry name" value="Ribosomal_S2"/>
    <property type="match status" value="1"/>
</dbReference>
<dbReference type="PRINTS" id="PR00395">
    <property type="entry name" value="RIBOSOMALS2"/>
</dbReference>
<dbReference type="SUPFAM" id="SSF52313">
    <property type="entry name" value="Ribosomal protein S2"/>
    <property type="match status" value="1"/>
</dbReference>
<dbReference type="PROSITE" id="PS00962">
    <property type="entry name" value="RIBOSOMAL_S2_1"/>
    <property type="match status" value="1"/>
</dbReference>
<name>RS2_MICLC</name>
<accession>C5C9Q4</accession>
<keyword id="KW-1185">Reference proteome</keyword>
<keyword id="KW-0687">Ribonucleoprotein</keyword>
<keyword id="KW-0689">Ribosomal protein</keyword>
<comment type="similarity">
    <text evidence="1">Belongs to the universal ribosomal protein uS2 family.</text>
</comment>
<proteinExistence type="inferred from homology"/>
<organism>
    <name type="scientific">Micrococcus luteus (strain ATCC 4698 / DSM 20030 / JCM 1464 / CCM 169 / CCUG 5858 / IAM 1056 / NBRC 3333 / NCIMB 9278 / NCTC 2665 / VKM Ac-2230)</name>
    <name type="common">Micrococcus lysodeikticus</name>
    <dbReference type="NCBI Taxonomy" id="465515"/>
    <lineage>
        <taxon>Bacteria</taxon>
        <taxon>Bacillati</taxon>
        <taxon>Actinomycetota</taxon>
        <taxon>Actinomycetes</taxon>
        <taxon>Micrococcales</taxon>
        <taxon>Micrococcaceae</taxon>
        <taxon>Micrococcus</taxon>
    </lineage>
</organism>
<gene>
    <name evidence="1" type="primary">rpsB</name>
    <name type="ordered locus">Mlut_06740</name>
</gene>
<sequence>MPVVTMRQLLDSGVHFGHQTRRWNPKMKRFIFTERNGIYIIDLQQSLSYIDRAYEFVKETVAHGGTILFVGTKKQAQEAIAEQAGRVGMPYVNHRWLGGMLTNFSTVSKRVQRMKELEEIDFEDVAGSQFTKKELLLLNRELEKLQANLGGIRNMAKTPSAVWVVDTKKEHLAVDEAQKLGIPVVAILDTNCDPDEVAYPIPGNDDAIRSVNLLTRVVADAVAEGLIARQGGKSGQAAAEPMAEWERELLEQHNAQQAEQAEAPAAEAPAEPAEAPAAEAAPQGE</sequence>
<reference key="1">
    <citation type="journal article" date="2010" name="J. Bacteriol.">
        <title>Genome sequence of the Fleming strain of Micrococcus luteus, a simple free-living actinobacterium.</title>
        <authorList>
            <person name="Young M."/>
            <person name="Artsatbanov V."/>
            <person name="Beller H.R."/>
            <person name="Chandra G."/>
            <person name="Chater K.F."/>
            <person name="Dover L.G."/>
            <person name="Goh E.B."/>
            <person name="Kahan T."/>
            <person name="Kaprelyants A.S."/>
            <person name="Kyrpides N."/>
            <person name="Lapidus A."/>
            <person name="Lowry S.R."/>
            <person name="Lykidis A."/>
            <person name="Mahillon J."/>
            <person name="Markowitz V."/>
            <person name="Mavromatis K."/>
            <person name="Mukamolova G.V."/>
            <person name="Oren A."/>
            <person name="Rokem J.S."/>
            <person name="Smith M.C."/>
            <person name="Young D.I."/>
            <person name="Greenblatt C.L."/>
        </authorList>
    </citation>
    <scope>NUCLEOTIDE SEQUENCE [LARGE SCALE GENOMIC DNA]</scope>
    <source>
        <strain>ATCC 4698 / DSM 20030 / JCM 1464 / CCM 169 / CCUG 5858 / IAM 1056 / NBRC 3333 / NCIMB 9278 / NCTC 2665 / VKM Ac-2230</strain>
    </source>
</reference>
<feature type="chain" id="PRO_1000204888" description="Small ribosomal subunit protein uS2">
    <location>
        <begin position="1"/>
        <end position="285"/>
    </location>
</feature>
<feature type="region of interest" description="Disordered" evidence="2">
    <location>
        <begin position="231"/>
        <end position="285"/>
    </location>
</feature>
<feature type="compositionally biased region" description="Low complexity" evidence="2">
    <location>
        <begin position="255"/>
        <end position="285"/>
    </location>
</feature>